<name>SYL_BACTN</name>
<dbReference type="EC" id="6.1.1.4" evidence="1"/>
<dbReference type="EMBL" id="AE015928">
    <property type="protein sequence ID" value="AAO78232.1"/>
    <property type="molecule type" value="Genomic_DNA"/>
</dbReference>
<dbReference type="RefSeq" id="NP_812038.1">
    <property type="nucleotide sequence ID" value="NC_004663.1"/>
</dbReference>
<dbReference type="RefSeq" id="WP_011108648.1">
    <property type="nucleotide sequence ID" value="NC_004663.1"/>
</dbReference>
<dbReference type="SMR" id="Q8A329"/>
<dbReference type="FunCoup" id="Q8A329">
    <property type="interactions" value="564"/>
</dbReference>
<dbReference type="STRING" id="226186.BT_3126"/>
<dbReference type="PaxDb" id="226186-BT_3126"/>
<dbReference type="EnsemblBacteria" id="AAO78232">
    <property type="protein sequence ID" value="AAO78232"/>
    <property type="gene ID" value="BT_3126"/>
</dbReference>
<dbReference type="GeneID" id="60924307"/>
<dbReference type="KEGG" id="bth:BT_3126"/>
<dbReference type="PATRIC" id="fig|226186.12.peg.3189"/>
<dbReference type="eggNOG" id="COG0495">
    <property type="taxonomic scope" value="Bacteria"/>
</dbReference>
<dbReference type="HOGENOM" id="CLU_004427_0_0_10"/>
<dbReference type="InParanoid" id="Q8A329"/>
<dbReference type="OrthoDB" id="9810365at2"/>
<dbReference type="Proteomes" id="UP000001414">
    <property type="component" value="Chromosome"/>
</dbReference>
<dbReference type="GO" id="GO:0005829">
    <property type="term" value="C:cytosol"/>
    <property type="evidence" value="ECO:0000318"/>
    <property type="project" value="GO_Central"/>
</dbReference>
<dbReference type="GO" id="GO:0002161">
    <property type="term" value="F:aminoacyl-tRNA deacylase activity"/>
    <property type="evidence" value="ECO:0007669"/>
    <property type="project" value="InterPro"/>
</dbReference>
<dbReference type="GO" id="GO:0005524">
    <property type="term" value="F:ATP binding"/>
    <property type="evidence" value="ECO:0007669"/>
    <property type="project" value="UniProtKB-UniRule"/>
</dbReference>
<dbReference type="GO" id="GO:0004823">
    <property type="term" value="F:leucine-tRNA ligase activity"/>
    <property type="evidence" value="ECO:0000318"/>
    <property type="project" value="GO_Central"/>
</dbReference>
<dbReference type="GO" id="GO:0006429">
    <property type="term" value="P:leucyl-tRNA aminoacylation"/>
    <property type="evidence" value="ECO:0000318"/>
    <property type="project" value="GO_Central"/>
</dbReference>
<dbReference type="CDD" id="cd07958">
    <property type="entry name" value="Anticodon_Ia_Leu_BEm"/>
    <property type="match status" value="1"/>
</dbReference>
<dbReference type="FunFam" id="3.40.50.620:FF:000056">
    <property type="entry name" value="Leucine--tRNA ligase"/>
    <property type="match status" value="1"/>
</dbReference>
<dbReference type="FunFam" id="3.40.50.620:FF:000060">
    <property type="entry name" value="Leucine--tRNA ligase"/>
    <property type="match status" value="1"/>
</dbReference>
<dbReference type="FunFam" id="3.40.50.620:FF:000154">
    <property type="entry name" value="Leucine--tRNA ligase"/>
    <property type="match status" value="1"/>
</dbReference>
<dbReference type="FunFam" id="1.10.730.10:FF:000011">
    <property type="entry name" value="Leucine--tRNA ligase chloroplastic/mitochondrial"/>
    <property type="match status" value="1"/>
</dbReference>
<dbReference type="Gene3D" id="3.40.50.620">
    <property type="entry name" value="HUPs"/>
    <property type="match status" value="3"/>
</dbReference>
<dbReference type="Gene3D" id="1.10.730.10">
    <property type="entry name" value="Isoleucyl-tRNA Synthetase, Domain 1"/>
    <property type="match status" value="2"/>
</dbReference>
<dbReference type="HAMAP" id="MF_00049_B">
    <property type="entry name" value="Leu_tRNA_synth_B"/>
    <property type="match status" value="1"/>
</dbReference>
<dbReference type="InterPro" id="IPR001412">
    <property type="entry name" value="aa-tRNA-synth_I_CS"/>
</dbReference>
<dbReference type="InterPro" id="IPR002302">
    <property type="entry name" value="Leu-tRNA-ligase"/>
</dbReference>
<dbReference type="InterPro" id="IPR025709">
    <property type="entry name" value="Leu_tRNA-synth_edit"/>
</dbReference>
<dbReference type="InterPro" id="IPR013155">
    <property type="entry name" value="M/V/L/I-tRNA-synth_anticd-bd"/>
</dbReference>
<dbReference type="InterPro" id="IPR015413">
    <property type="entry name" value="Methionyl/Leucyl_tRNA_Synth"/>
</dbReference>
<dbReference type="InterPro" id="IPR014729">
    <property type="entry name" value="Rossmann-like_a/b/a_fold"/>
</dbReference>
<dbReference type="InterPro" id="IPR009080">
    <property type="entry name" value="tRNAsynth_Ia_anticodon-bd"/>
</dbReference>
<dbReference type="InterPro" id="IPR009008">
    <property type="entry name" value="Val/Leu/Ile-tRNA-synth_edit"/>
</dbReference>
<dbReference type="NCBIfam" id="TIGR00396">
    <property type="entry name" value="leuS_bact"/>
    <property type="match status" value="1"/>
</dbReference>
<dbReference type="PANTHER" id="PTHR43740:SF2">
    <property type="entry name" value="LEUCINE--TRNA LIGASE, MITOCHONDRIAL"/>
    <property type="match status" value="1"/>
</dbReference>
<dbReference type="PANTHER" id="PTHR43740">
    <property type="entry name" value="LEUCYL-TRNA SYNTHETASE"/>
    <property type="match status" value="1"/>
</dbReference>
<dbReference type="Pfam" id="PF08264">
    <property type="entry name" value="Anticodon_1"/>
    <property type="match status" value="1"/>
</dbReference>
<dbReference type="Pfam" id="PF13603">
    <property type="entry name" value="tRNA-synt_1_2"/>
    <property type="match status" value="1"/>
</dbReference>
<dbReference type="Pfam" id="PF09334">
    <property type="entry name" value="tRNA-synt_1g"/>
    <property type="match status" value="1"/>
</dbReference>
<dbReference type="PRINTS" id="PR00985">
    <property type="entry name" value="TRNASYNTHLEU"/>
</dbReference>
<dbReference type="SUPFAM" id="SSF47323">
    <property type="entry name" value="Anticodon-binding domain of a subclass of class I aminoacyl-tRNA synthetases"/>
    <property type="match status" value="1"/>
</dbReference>
<dbReference type="SUPFAM" id="SSF52374">
    <property type="entry name" value="Nucleotidylyl transferase"/>
    <property type="match status" value="1"/>
</dbReference>
<dbReference type="SUPFAM" id="SSF50677">
    <property type="entry name" value="ValRS/IleRS/LeuRS editing domain"/>
    <property type="match status" value="1"/>
</dbReference>
<dbReference type="PROSITE" id="PS00178">
    <property type="entry name" value="AA_TRNA_LIGASE_I"/>
    <property type="match status" value="1"/>
</dbReference>
<accession>Q8A329</accession>
<evidence type="ECO:0000255" key="1">
    <source>
        <dbReference type="HAMAP-Rule" id="MF_00049"/>
    </source>
</evidence>
<sequence>MEYNFREIEKKWQQRWVEEKTYQVTEDESKQKFYVLNMFPYPSGAGLHVGHPLGYIASDIYARYKRLRGFNVLNPMGYDAYGLPAEQYAIQTGQHPAITTKANIDRYREQLDKIGFSFDWSREIRTCEPEYYHWTQWAFQKMFNSYYCNDEQQARPIQELIDAFAIYGNEGLNAACSEELSFTAKEWKAKSEKEQQEILMNYRIAYLGETMVNWCQALGTVLANDEVIDGVSERGGFPVVQKKMRQWCLRVSAYAQRLLDGLDTIDWTESLKETQKNWIGRSEGAEVQFKVKDSDLEFTIFTTRADTMFGVTFMVLAPESDLVAQLTTPAQKAEVDAYLDRTKKRTERERIADRSVTGVFSGSYAINPFTGEAVPIWISDYVLAGYGTGAIMAVPAHDSRDYAFAKHFGLEIRPLVEGCDVSEESFDAKEGIVCNSPRPDVTPYCDLSLNGLTIKEAIEKTKQYVKEHNLGRVKVNYRLRDAIFSRQRYWGEPFPVYYKDGMPYMIDEDCLPLELPEVDKFLPTETGEPPLGHAKEWAWDTVNKCTVENEKIDNVTIFPLELNTMPGFAGSSAYYLRYMDPHNNKALVDPKVDEYWKNVDLYVGGTEHATGHLIYSRFWNKFLHDVGASVVEEPFQKLVNQGMIQGRSNFVYRIKDTHTFVSLNLKDQYEVTPLHVDVNIVSNDILDLEAFKAWRPEYAEAEFILEDGKYICGWAVEKMSKSMFNVVNPDMIVDKYGADTLRMYEMFLGPVEQSKPWDTNGIDGVHRFIRKFWSLFYSRTDEYLVKDEPATKEELKSLHKLIKKVTGDIEQFSYNTSVSAFMICVNELSNLKCNKKEILEQLVITLAPFAPHVCEELWDTLGHETSVCDAAWPAYNEEYLKEDTINYTISFNGKARFNMEFDADAASDAIQAAVLADERSQKWIEGKTPKKIIVVPKKIVNVVV</sequence>
<reference key="1">
    <citation type="journal article" date="2003" name="Science">
        <title>A genomic view of the human-Bacteroides thetaiotaomicron symbiosis.</title>
        <authorList>
            <person name="Xu J."/>
            <person name="Bjursell M.K."/>
            <person name="Himrod J."/>
            <person name="Deng S."/>
            <person name="Carmichael L.K."/>
            <person name="Chiang H.C."/>
            <person name="Hooper L.V."/>
            <person name="Gordon J.I."/>
        </authorList>
    </citation>
    <scope>NUCLEOTIDE SEQUENCE [LARGE SCALE GENOMIC DNA]</scope>
    <source>
        <strain>ATCC 29148 / DSM 2079 / JCM 5827 / CCUG 10774 / NCTC 10582 / VPI-5482 / E50</strain>
    </source>
</reference>
<comment type="catalytic activity">
    <reaction evidence="1">
        <text>tRNA(Leu) + L-leucine + ATP = L-leucyl-tRNA(Leu) + AMP + diphosphate</text>
        <dbReference type="Rhea" id="RHEA:11688"/>
        <dbReference type="Rhea" id="RHEA-COMP:9613"/>
        <dbReference type="Rhea" id="RHEA-COMP:9622"/>
        <dbReference type="ChEBI" id="CHEBI:30616"/>
        <dbReference type="ChEBI" id="CHEBI:33019"/>
        <dbReference type="ChEBI" id="CHEBI:57427"/>
        <dbReference type="ChEBI" id="CHEBI:78442"/>
        <dbReference type="ChEBI" id="CHEBI:78494"/>
        <dbReference type="ChEBI" id="CHEBI:456215"/>
        <dbReference type="EC" id="6.1.1.4"/>
    </reaction>
</comment>
<comment type="subcellular location">
    <subcellularLocation>
        <location evidence="1">Cytoplasm</location>
    </subcellularLocation>
</comment>
<comment type="similarity">
    <text evidence="1">Belongs to the class-I aminoacyl-tRNA synthetase family.</text>
</comment>
<keyword id="KW-0030">Aminoacyl-tRNA synthetase</keyword>
<keyword id="KW-0067">ATP-binding</keyword>
<keyword id="KW-0963">Cytoplasm</keyword>
<keyword id="KW-0436">Ligase</keyword>
<keyword id="KW-0547">Nucleotide-binding</keyword>
<keyword id="KW-0648">Protein biosynthesis</keyword>
<keyword id="KW-1185">Reference proteome</keyword>
<feature type="chain" id="PRO_0000151974" description="Leucine--tRNA ligase">
    <location>
        <begin position="1"/>
        <end position="944"/>
    </location>
</feature>
<feature type="short sequence motif" description="'HIGH' region">
    <location>
        <begin position="40"/>
        <end position="51"/>
    </location>
</feature>
<feature type="short sequence motif" description="'KMSKS' region">
    <location>
        <begin position="718"/>
        <end position="722"/>
    </location>
</feature>
<feature type="binding site" evidence="1">
    <location>
        <position position="721"/>
    </location>
    <ligand>
        <name>ATP</name>
        <dbReference type="ChEBI" id="CHEBI:30616"/>
    </ligand>
</feature>
<protein>
    <recommendedName>
        <fullName evidence="1">Leucine--tRNA ligase</fullName>
        <ecNumber evidence="1">6.1.1.4</ecNumber>
    </recommendedName>
    <alternativeName>
        <fullName evidence="1">Leucyl-tRNA synthetase</fullName>
        <shortName evidence="1">LeuRS</shortName>
    </alternativeName>
</protein>
<proteinExistence type="inferred from homology"/>
<organism>
    <name type="scientific">Bacteroides thetaiotaomicron (strain ATCC 29148 / DSM 2079 / JCM 5827 / CCUG 10774 / NCTC 10582 / VPI-5482 / E50)</name>
    <dbReference type="NCBI Taxonomy" id="226186"/>
    <lineage>
        <taxon>Bacteria</taxon>
        <taxon>Pseudomonadati</taxon>
        <taxon>Bacteroidota</taxon>
        <taxon>Bacteroidia</taxon>
        <taxon>Bacteroidales</taxon>
        <taxon>Bacteroidaceae</taxon>
        <taxon>Bacteroides</taxon>
    </lineage>
</organism>
<gene>
    <name evidence="1" type="primary">leuS</name>
    <name type="ordered locus">BT_3126</name>
</gene>